<protein>
    <recommendedName>
        <fullName evidence="1">UDP-N-acetylmuramate--L-alanine ligase</fullName>
        <ecNumber evidence="1">6.3.2.8</ecNumber>
    </recommendedName>
    <alternativeName>
        <fullName evidence="1">UDP-N-acetylmuramoyl-L-alanine synthetase</fullName>
    </alternativeName>
</protein>
<accession>Q2IYK6</accession>
<name>MURC_RHOP2</name>
<evidence type="ECO:0000255" key="1">
    <source>
        <dbReference type="HAMAP-Rule" id="MF_00046"/>
    </source>
</evidence>
<sequence length="468" mass="49964">MRLPREIGPIHFVGIGGIGMSGIAEVLCNLGYTVQGSDASESANVSRLREKGIQIHVGHKADNVAGADVLVVSTAIKRDNPELLAARAQRIPVVRRAEMLAELMRLKSCVAIAGTHGKTTTTSMVAALLDAGDFDPTVINGGIINAYGTNARLGAGDWMVVEADESDGTFLKLPADVAIVTNVDPEHLDHFKTFDAVQDAFRNFVENVPFYGFAVMCIDHPVVQALVGKIEDRRIITYGENPQADARLLELKPSGSGSTFKVAFRDRKAGTAHEIAELMLPMPGRHNALNATAAIAVAHELGLSDDTIRKALAAFGGVRRRFTKTGDWNGVTIIDDYGHHPVEIAAVLKAARQSTDGRVIAVVQPHRFTRLQSLFEEFCTCFNDADSVIVADVYPAGEAPIQGIDRDHFVLGLRAHGHRNVIPLQDSASLAGVVAGVAKSGDYVVCLGAGNITQWAYALPGELKALGG</sequence>
<comment type="function">
    <text evidence="1">Cell wall formation.</text>
</comment>
<comment type="catalytic activity">
    <reaction evidence="1">
        <text>UDP-N-acetyl-alpha-D-muramate + L-alanine + ATP = UDP-N-acetyl-alpha-D-muramoyl-L-alanine + ADP + phosphate + H(+)</text>
        <dbReference type="Rhea" id="RHEA:23372"/>
        <dbReference type="ChEBI" id="CHEBI:15378"/>
        <dbReference type="ChEBI" id="CHEBI:30616"/>
        <dbReference type="ChEBI" id="CHEBI:43474"/>
        <dbReference type="ChEBI" id="CHEBI:57972"/>
        <dbReference type="ChEBI" id="CHEBI:70757"/>
        <dbReference type="ChEBI" id="CHEBI:83898"/>
        <dbReference type="ChEBI" id="CHEBI:456216"/>
        <dbReference type="EC" id="6.3.2.8"/>
    </reaction>
</comment>
<comment type="pathway">
    <text evidence="1">Cell wall biogenesis; peptidoglycan biosynthesis.</text>
</comment>
<comment type="subcellular location">
    <subcellularLocation>
        <location evidence="1">Cytoplasm</location>
    </subcellularLocation>
</comment>
<comment type="similarity">
    <text evidence="1">Belongs to the MurCDEF family.</text>
</comment>
<feature type="chain" id="PRO_0000242587" description="UDP-N-acetylmuramate--L-alanine ligase">
    <location>
        <begin position="1"/>
        <end position="468"/>
    </location>
</feature>
<feature type="binding site" evidence="1">
    <location>
        <begin position="114"/>
        <end position="120"/>
    </location>
    <ligand>
        <name>ATP</name>
        <dbReference type="ChEBI" id="CHEBI:30616"/>
    </ligand>
</feature>
<gene>
    <name evidence="1" type="primary">murC</name>
    <name type="ordered locus">RPB_1996</name>
</gene>
<proteinExistence type="inferred from homology"/>
<organism>
    <name type="scientific">Rhodopseudomonas palustris (strain HaA2)</name>
    <dbReference type="NCBI Taxonomy" id="316058"/>
    <lineage>
        <taxon>Bacteria</taxon>
        <taxon>Pseudomonadati</taxon>
        <taxon>Pseudomonadota</taxon>
        <taxon>Alphaproteobacteria</taxon>
        <taxon>Hyphomicrobiales</taxon>
        <taxon>Nitrobacteraceae</taxon>
        <taxon>Rhodopseudomonas</taxon>
    </lineage>
</organism>
<reference key="1">
    <citation type="submission" date="2006-01" db="EMBL/GenBank/DDBJ databases">
        <title>Complete sequence of Rhodopseudomonas palustris HaA2.</title>
        <authorList>
            <consortium name="US DOE Joint Genome Institute"/>
            <person name="Copeland A."/>
            <person name="Lucas S."/>
            <person name="Lapidus A."/>
            <person name="Barry K."/>
            <person name="Detter J.C."/>
            <person name="Glavina T."/>
            <person name="Hammon N."/>
            <person name="Israni S."/>
            <person name="Pitluck S."/>
            <person name="Chain P."/>
            <person name="Malfatti S."/>
            <person name="Shin M."/>
            <person name="Vergez L."/>
            <person name="Schmutz J."/>
            <person name="Larimer F."/>
            <person name="Land M."/>
            <person name="Hauser L."/>
            <person name="Pelletier D.A."/>
            <person name="Kyrpides N."/>
            <person name="Anderson I."/>
            <person name="Oda Y."/>
            <person name="Harwood C.S."/>
            <person name="Richardson P."/>
        </authorList>
    </citation>
    <scope>NUCLEOTIDE SEQUENCE [LARGE SCALE GENOMIC DNA]</scope>
    <source>
        <strain>HaA2</strain>
    </source>
</reference>
<dbReference type="EC" id="6.3.2.8" evidence="1"/>
<dbReference type="EMBL" id="CP000250">
    <property type="protein sequence ID" value="ABD06704.1"/>
    <property type="molecule type" value="Genomic_DNA"/>
</dbReference>
<dbReference type="RefSeq" id="WP_011440892.1">
    <property type="nucleotide sequence ID" value="NC_007778.1"/>
</dbReference>
<dbReference type="SMR" id="Q2IYK6"/>
<dbReference type="STRING" id="316058.RPB_1996"/>
<dbReference type="KEGG" id="rpb:RPB_1996"/>
<dbReference type="eggNOG" id="COG0773">
    <property type="taxonomic scope" value="Bacteria"/>
</dbReference>
<dbReference type="HOGENOM" id="CLU_028104_2_2_5"/>
<dbReference type="OrthoDB" id="9804126at2"/>
<dbReference type="UniPathway" id="UPA00219"/>
<dbReference type="Proteomes" id="UP000008809">
    <property type="component" value="Chromosome"/>
</dbReference>
<dbReference type="GO" id="GO:0005737">
    <property type="term" value="C:cytoplasm"/>
    <property type="evidence" value="ECO:0007669"/>
    <property type="project" value="UniProtKB-SubCell"/>
</dbReference>
<dbReference type="GO" id="GO:0005524">
    <property type="term" value="F:ATP binding"/>
    <property type="evidence" value="ECO:0007669"/>
    <property type="project" value="UniProtKB-UniRule"/>
</dbReference>
<dbReference type="GO" id="GO:0008763">
    <property type="term" value="F:UDP-N-acetylmuramate-L-alanine ligase activity"/>
    <property type="evidence" value="ECO:0007669"/>
    <property type="project" value="UniProtKB-UniRule"/>
</dbReference>
<dbReference type="GO" id="GO:0051301">
    <property type="term" value="P:cell division"/>
    <property type="evidence" value="ECO:0007669"/>
    <property type="project" value="UniProtKB-KW"/>
</dbReference>
<dbReference type="GO" id="GO:0071555">
    <property type="term" value="P:cell wall organization"/>
    <property type="evidence" value="ECO:0007669"/>
    <property type="project" value="UniProtKB-KW"/>
</dbReference>
<dbReference type="GO" id="GO:0009252">
    <property type="term" value="P:peptidoglycan biosynthetic process"/>
    <property type="evidence" value="ECO:0007669"/>
    <property type="project" value="UniProtKB-UniRule"/>
</dbReference>
<dbReference type="GO" id="GO:0008360">
    <property type="term" value="P:regulation of cell shape"/>
    <property type="evidence" value="ECO:0007669"/>
    <property type="project" value="UniProtKB-KW"/>
</dbReference>
<dbReference type="Gene3D" id="3.90.190.20">
    <property type="entry name" value="Mur ligase, C-terminal domain"/>
    <property type="match status" value="1"/>
</dbReference>
<dbReference type="Gene3D" id="3.40.1190.10">
    <property type="entry name" value="Mur-like, catalytic domain"/>
    <property type="match status" value="1"/>
</dbReference>
<dbReference type="Gene3D" id="3.40.50.720">
    <property type="entry name" value="NAD(P)-binding Rossmann-like Domain"/>
    <property type="match status" value="1"/>
</dbReference>
<dbReference type="HAMAP" id="MF_00046">
    <property type="entry name" value="MurC"/>
    <property type="match status" value="1"/>
</dbReference>
<dbReference type="InterPro" id="IPR036565">
    <property type="entry name" value="Mur-like_cat_sf"/>
</dbReference>
<dbReference type="InterPro" id="IPR004101">
    <property type="entry name" value="Mur_ligase_C"/>
</dbReference>
<dbReference type="InterPro" id="IPR036615">
    <property type="entry name" value="Mur_ligase_C_dom_sf"/>
</dbReference>
<dbReference type="InterPro" id="IPR013221">
    <property type="entry name" value="Mur_ligase_cen"/>
</dbReference>
<dbReference type="InterPro" id="IPR000713">
    <property type="entry name" value="Mur_ligase_N"/>
</dbReference>
<dbReference type="InterPro" id="IPR050061">
    <property type="entry name" value="MurCDEF_pg_biosynth"/>
</dbReference>
<dbReference type="InterPro" id="IPR005758">
    <property type="entry name" value="UDP-N-AcMur_Ala_ligase_MurC"/>
</dbReference>
<dbReference type="NCBIfam" id="TIGR01082">
    <property type="entry name" value="murC"/>
    <property type="match status" value="1"/>
</dbReference>
<dbReference type="PANTHER" id="PTHR43445:SF3">
    <property type="entry name" value="UDP-N-ACETYLMURAMATE--L-ALANINE LIGASE"/>
    <property type="match status" value="1"/>
</dbReference>
<dbReference type="PANTHER" id="PTHR43445">
    <property type="entry name" value="UDP-N-ACETYLMURAMATE--L-ALANINE LIGASE-RELATED"/>
    <property type="match status" value="1"/>
</dbReference>
<dbReference type="Pfam" id="PF01225">
    <property type="entry name" value="Mur_ligase"/>
    <property type="match status" value="1"/>
</dbReference>
<dbReference type="Pfam" id="PF02875">
    <property type="entry name" value="Mur_ligase_C"/>
    <property type="match status" value="1"/>
</dbReference>
<dbReference type="Pfam" id="PF08245">
    <property type="entry name" value="Mur_ligase_M"/>
    <property type="match status" value="1"/>
</dbReference>
<dbReference type="SUPFAM" id="SSF51984">
    <property type="entry name" value="MurCD N-terminal domain"/>
    <property type="match status" value="1"/>
</dbReference>
<dbReference type="SUPFAM" id="SSF53623">
    <property type="entry name" value="MurD-like peptide ligases, catalytic domain"/>
    <property type="match status" value="1"/>
</dbReference>
<dbReference type="SUPFAM" id="SSF53244">
    <property type="entry name" value="MurD-like peptide ligases, peptide-binding domain"/>
    <property type="match status" value="1"/>
</dbReference>
<keyword id="KW-0067">ATP-binding</keyword>
<keyword id="KW-0131">Cell cycle</keyword>
<keyword id="KW-0132">Cell division</keyword>
<keyword id="KW-0133">Cell shape</keyword>
<keyword id="KW-0961">Cell wall biogenesis/degradation</keyword>
<keyword id="KW-0963">Cytoplasm</keyword>
<keyword id="KW-0436">Ligase</keyword>
<keyword id="KW-0547">Nucleotide-binding</keyword>
<keyword id="KW-0573">Peptidoglycan synthesis</keyword>
<keyword id="KW-1185">Reference proteome</keyword>